<comment type="function">
    <text evidence="1">Postsynaptic neurotoxin.</text>
</comment>
<comment type="subcellular location">
    <subcellularLocation>
        <location evidence="1">Secreted</location>
    </subcellularLocation>
</comment>
<comment type="tissue specificity">
    <text>Expressed by the venom gland.</text>
</comment>
<comment type="similarity">
    <text evidence="3">Belongs to the neurotoxin 12 (Hwtx-2) family. 02 (Hwtx-2) subfamily.</text>
</comment>
<evidence type="ECO:0000250" key="1"/>
<evidence type="ECO:0000255" key="2"/>
<evidence type="ECO:0000305" key="3"/>
<sequence length="84" mass="9269">MKVTLIAILTCAAVLVLHTTAAEELEESQLMEVGMPDTELAAVDEERLFECSVSCEIEKEGNKGCKKKKCKGGWKCKFNMCVKV</sequence>
<proteinExistence type="evidence at transcript level"/>
<name>H2J02_CYRHA</name>
<reference key="1">
    <citation type="journal article" date="2010" name="J. Proteome Res.">
        <title>Molecular diversification of peptide toxins from the tarantula Haplopelma hainanum (Ornithoctonus hainana) venom based on transcriptomic, peptidomic, and genomic analyses.</title>
        <authorList>
            <person name="Tang X."/>
            <person name="Zhang Y."/>
            <person name="Hu W."/>
            <person name="Xu D."/>
            <person name="Tao H."/>
            <person name="Yang X."/>
            <person name="Li Y."/>
            <person name="Jiang L."/>
            <person name="Liang S."/>
        </authorList>
    </citation>
    <scope>NUCLEOTIDE SEQUENCE [LARGE SCALE MRNA]</scope>
    <source>
        <tissue>Venom gland</tissue>
    </source>
</reference>
<protein>
    <recommendedName>
        <fullName>U4-theraphotoxin-Hhn1b</fullName>
        <shortName>U4-TRTX-Hhn1b</shortName>
    </recommendedName>
    <alternativeName>
        <fullName>Hainantoxin-II-10.2</fullName>
        <shortName>HNTX-II-10.2</shortName>
    </alternativeName>
</protein>
<accession>D2Y231</accession>
<dbReference type="EMBL" id="GU292908">
    <property type="protein sequence ID" value="ADB56724.1"/>
    <property type="molecule type" value="mRNA"/>
</dbReference>
<dbReference type="SMR" id="D2Y231"/>
<dbReference type="ArachnoServer" id="AS001856">
    <property type="toxin name" value="U4-theraphotoxin-Hhn1b"/>
</dbReference>
<dbReference type="GO" id="GO:0005576">
    <property type="term" value="C:extracellular region"/>
    <property type="evidence" value="ECO:0007669"/>
    <property type="project" value="UniProtKB-SubCell"/>
</dbReference>
<dbReference type="GO" id="GO:0035792">
    <property type="term" value="C:host cell postsynaptic membrane"/>
    <property type="evidence" value="ECO:0007669"/>
    <property type="project" value="UniProtKB-KW"/>
</dbReference>
<dbReference type="GO" id="GO:0090729">
    <property type="term" value="F:toxin activity"/>
    <property type="evidence" value="ECO:0007669"/>
    <property type="project" value="UniProtKB-KW"/>
</dbReference>
<dbReference type="InterPro" id="IPR012625">
    <property type="entry name" value="Hwtx-2-like"/>
</dbReference>
<dbReference type="Pfam" id="PF08089">
    <property type="entry name" value="Toxin_20"/>
    <property type="match status" value="1"/>
</dbReference>
<dbReference type="SUPFAM" id="SSF57059">
    <property type="entry name" value="omega toxin-like"/>
    <property type="match status" value="1"/>
</dbReference>
<dbReference type="PROSITE" id="PS60022">
    <property type="entry name" value="HWTX_2"/>
    <property type="match status" value="1"/>
</dbReference>
<organism>
    <name type="scientific">Cyriopagopus hainanus</name>
    <name type="common">Chinese bird spider</name>
    <name type="synonym">Haplopelma hainanum</name>
    <dbReference type="NCBI Taxonomy" id="209901"/>
    <lineage>
        <taxon>Eukaryota</taxon>
        <taxon>Metazoa</taxon>
        <taxon>Ecdysozoa</taxon>
        <taxon>Arthropoda</taxon>
        <taxon>Chelicerata</taxon>
        <taxon>Arachnida</taxon>
        <taxon>Araneae</taxon>
        <taxon>Mygalomorphae</taxon>
        <taxon>Theraphosidae</taxon>
        <taxon>Haplopelma</taxon>
    </lineage>
</organism>
<keyword id="KW-1015">Disulfide bond</keyword>
<keyword id="KW-0528">Neurotoxin</keyword>
<keyword id="KW-0629">Postsynaptic neurotoxin</keyword>
<keyword id="KW-0964">Secreted</keyword>
<keyword id="KW-0732">Signal</keyword>
<keyword id="KW-0800">Toxin</keyword>
<feature type="signal peptide" evidence="2">
    <location>
        <begin position="1"/>
        <end position="22"/>
    </location>
</feature>
<feature type="propeptide" id="PRO_0000400787" evidence="1">
    <location>
        <begin position="23"/>
        <end position="47"/>
    </location>
</feature>
<feature type="peptide" id="PRO_0000400788" description="U4-theraphotoxin-Hhn1b">
    <location>
        <begin position="48"/>
        <end position="84"/>
    </location>
</feature>
<feature type="disulfide bond" evidence="1">
    <location>
        <begin position="51"/>
        <end position="65"/>
    </location>
</feature>
<feature type="disulfide bond" evidence="1">
    <location>
        <begin position="55"/>
        <end position="76"/>
    </location>
</feature>
<feature type="disulfide bond" evidence="1">
    <location>
        <begin position="70"/>
        <end position="81"/>
    </location>
</feature>